<keyword id="KW-0235">DNA replication</keyword>
<keyword id="KW-0238">DNA-binding</keyword>
<keyword id="KW-0244">Early protein</keyword>
<keyword id="KW-1030">Host cell inner membrane</keyword>
<keyword id="KW-1032">Host cell membrane</keyword>
<keyword id="KW-1043">Host membrane</keyword>
<keyword id="KW-0472">Membrane</keyword>
<keyword id="KW-1185">Reference proteome</keyword>
<comment type="function">
    <text>Transcribed prior to replication. This protein form parts of the replication complex and has DNA-binding properties.</text>
</comment>
<comment type="subcellular location">
    <subcellularLocation>
        <location>Host cell inner membrane</location>
    </subcellularLocation>
    <text>On the inner membrane of the host shortly after infection.</text>
</comment>
<proteinExistence type="predicted"/>
<organismHost>
    <name type="scientific">Escherichia coli</name>
    <dbReference type="NCBI Taxonomy" id="562"/>
</organismHost>
<name>VR2B_BPT4</name>
<accession>P03691</accession>
<protein>
    <recommendedName>
        <fullName>Protein rIIB</fullName>
    </recommendedName>
</protein>
<organism>
    <name type="scientific">Enterobacteria phage T4</name>
    <name type="common">Bacteriophage T4</name>
    <dbReference type="NCBI Taxonomy" id="10665"/>
    <lineage>
        <taxon>Viruses</taxon>
        <taxon>Duplodnaviria</taxon>
        <taxon>Heunggongvirae</taxon>
        <taxon>Uroviricota</taxon>
        <taxon>Caudoviricetes</taxon>
        <taxon>Straboviridae</taxon>
        <taxon>Tevenvirinae</taxon>
        <taxon>Tequatrovirus</taxon>
    </lineage>
</organism>
<gene>
    <name type="primary">rIIB</name>
</gene>
<reference key="1">
    <citation type="journal article" date="2003" name="Microbiol. Mol. Biol. Rev.">
        <title>Bacteriophage T4 genome.</title>
        <authorList>
            <person name="Miller E.S."/>
            <person name="Kutter E."/>
            <person name="Mosig G."/>
            <person name="Arisaka F."/>
            <person name="Kunisawa T."/>
            <person name="Ruger W."/>
        </authorList>
    </citation>
    <scope>NUCLEOTIDE SEQUENCE [LARGE SCALE GENOMIC DNA]</scope>
</reference>
<reference key="2">
    <citation type="journal article" date="1981" name="J. Mol. Biol.">
        <title>rII cistrons of bacteriophage T4. DNA sequence around the intercistronic divide and positions of genetic landmarks.</title>
        <authorList>
            <person name="Pribnow D."/>
            <person name="Sigurdson D.C."/>
            <person name="Gold L."/>
            <person name="Singer B.S."/>
            <person name="Napoli C."/>
            <person name="Brosius J."/>
            <person name="Dull T.J."/>
            <person name="Noller H.F."/>
        </authorList>
    </citation>
    <scope>NUCLEOTIDE SEQUENCE [GENOMIC DNA] OF 1-146</scope>
</reference>
<reference key="3">
    <citation type="journal article" date="1986" name="J. Mol. Biol.">
        <title>Spectrum of spontaneous frameshift mutations. Sequences of bacteriophage T4 rII gene frameshifts.</title>
        <authorList>
            <person name="Ripley L.S."/>
            <person name="Clark A."/>
            <person name="de Boer J.G."/>
        </authorList>
    </citation>
    <scope>NUCLEOTIDE SEQUENCE [GENOMIC DNA] OF 1-47</scope>
</reference>
<reference key="4">
    <citation type="journal article" date="1990" name="Genetics">
        <title>The rIIA gene of bacteriophage T4. I. Its DNA sequence and discovery of a new open reading frame between genes 60 and rIIA.</title>
        <authorList>
            <person name="Daegelen P."/>
            <person name="Brody E."/>
        </authorList>
    </citation>
    <scope>NUCLEOTIDE SEQUENCE [GENOMIC DNA] OF 1-33</scope>
</reference>
<reference key="5">
    <citation type="journal article" date="1986" name="Nucleic Acids Res.">
        <title>The 52-protein subunit of T4 DNA topoisomerase is homologous to the gyrA-protein of gyrase.</title>
        <authorList>
            <person name="Huang W.M."/>
        </authorList>
    </citation>
    <scope>NUCLEOTIDE SEQUENCE [GENOMIC DNA] OF 146-312</scope>
</reference>
<feature type="chain" id="PRO_0000165071" description="Protein rIIB">
    <location>
        <begin position="1"/>
        <end position="312"/>
    </location>
</feature>
<sequence length="312" mass="35541">MYNIKCLTKNEQAEIVKLYSSGNYTQQELADWQGVSVDTIRRVLKNAEEAKRPKVTISGDITVKVNSDAVIAPVAKSDIIWNASKKFISITVDGVTYNATPNTHSNFQEILNLLVADKLEEAAQKINVRRAVEKYISGDVRIEGGSLFYQNIELRSGLVDRILDSMEKGENFEFYFPFLENLLENPSQKAVSRLFDFLVANDIEITEDGYFYAWKVVRSNYFDCHSNTFDNSPGKVVKMPRTRVNDDDTQTCSRGLHVCSKSYIRHFGSSTSRVVKVKVHPRDVVSIPIDYNDAKMRTCQYEVVEDVTEQFK</sequence>
<dbReference type="EMBL" id="AF158101">
    <property type="protein sequence ID" value="AAD42649.1"/>
    <property type="molecule type" value="Genomic_DNA"/>
</dbReference>
<dbReference type="EMBL" id="M29623">
    <property type="protein sequence ID" value="AAA32532.1"/>
    <property type="molecule type" value="Genomic_DNA"/>
</dbReference>
<dbReference type="EMBL" id="X04376">
    <property type="protein sequence ID" value="CAA27958.1"/>
    <property type="molecule type" value="Genomic_DNA"/>
</dbReference>
<dbReference type="EMBL" id="X52686">
    <property type="status" value="NOT_ANNOTATED_CDS"/>
    <property type="molecule type" value="Genomic_DNA"/>
</dbReference>
<dbReference type="EMBL" id="D16359">
    <property type="protein sequence ID" value="BAA23635.1"/>
    <property type="molecule type" value="Genomic_DNA"/>
</dbReference>
<dbReference type="PIR" id="S52614">
    <property type="entry name" value="Z2BPB4"/>
</dbReference>
<dbReference type="RefSeq" id="NP_049889.1">
    <property type="nucleotide sequence ID" value="NC_000866.4"/>
</dbReference>
<dbReference type="GeneID" id="1258618"/>
<dbReference type="KEGG" id="vg:1258618"/>
<dbReference type="OrthoDB" id="11002at10239"/>
<dbReference type="Proteomes" id="UP000009087">
    <property type="component" value="Segment"/>
</dbReference>
<dbReference type="GO" id="GO:0020002">
    <property type="term" value="C:host cell plasma membrane"/>
    <property type="evidence" value="ECO:0007669"/>
    <property type="project" value="UniProtKB-SubCell"/>
</dbReference>
<dbReference type="GO" id="GO:0016020">
    <property type="term" value="C:membrane"/>
    <property type="evidence" value="ECO:0007669"/>
    <property type="project" value="UniProtKB-KW"/>
</dbReference>
<dbReference type="GO" id="GO:0003677">
    <property type="term" value="F:DNA binding"/>
    <property type="evidence" value="ECO:0007669"/>
    <property type="project" value="UniProtKB-KW"/>
</dbReference>
<dbReference type="GO" id="GO:0006260">
    <property type="term" value="P:DNA replication"/>
    <property type="evidence" value="ECO:0007669"/>
    <property type="project" value="UniProtKB-KW"/>
</dbReference>